<name>CP11A_HYPAM</name>
<gene>
    <name type="primary">CYP11A1</name>
</gene>
<dbReference type="EC" id="1.14.15.6"/>
<dbReference type="EMBL" id="U63299">
    <property type="protein sequence ID" value="AAC60095.1"/>
    <property type="molecule type" value="mRNA"/>
</dbReference>
<dbReference type="SMR" id="Q92045"/>
<dbReference type="UniPathway" id="UPA00229"/>
<dbReference type="GO" id="GO:0005743">
    <property type="term" value="C:mitochondrial inner membrane"/>
    <property type="evidence" value="ECO:0000250"/>
    <property type="project" value="UniProtKB"/>
</dbReference>
<dbReference type="GO" id="GO:0008386">
    <property type="term" value="F:cholesterol monooxygenase (side-chain-cleaving) activity"/>
    <property type="evidence" value="ECO:0007669"/>
    <property type="project" value="UniProtKB-EC"/>
</dbReference>
<dbReference type="GO" id="GO:0020037">
    <property type="term" value="F:heme binding"/>
    <property type="evidence" value="ECO:0007669"/>
    <property type="project" value="InterPro"/>
</dbReference>
<dbReference type="GO" id="GO:0005506">
    <property type="term" value="F:iron ion binding"/>
    <property type="evidence" value="ECO:0007669"/>
    <property type="project" value="InterPro"/>
</dbReference>
<dbReference type="GO" id="GO:0006700">
    <property type="term" value="P:C21-steroid hormone biosynthetic process"/>
    <property type="evidence" value="ECO:0007669"/>
    <property type="project" value="TreeGrafter"/>
</dbReference>
<dbReference type="GO" id="GO:0071375">
    <property type="term" value="P:cellular response to peptide hormone stimulus"/>
    <property type="evidence" value="ECO:0007669"/>
    <property type="project" value="TreeGrafter"/>
</dbReference>
<dbReference type="GO" id="GO:0008203">
    <property type="term" value="P:cholesterol metabolic process"/>
    <property type="evidence" value="ECO:0007669"/>
    <property type="project" value="UniProtKB-KW"/>
</dbReference>
<dbReference type="GO" id="GO:0034650">
    <property type="term" value="P:cortisol metabolic process"/>
    <property type="evidence" value="ECO:0007669"/>
    <property type="project" value="TreeGrafter"/>
</dbReference>
<dbReference type="GO" id="GO:0006704">
    <property type="term" value="P:glucocorticoid biosynthetic process"/>
    <property type="evidence" value="ECO:0007669"/>
    <property type="project" value="TreeGrafter"/>
</dbReference>
<dbReference type="CDD" id="cd20643">
    <property type="entry name" value="CYP11A1"/>
    <property type="match status" value="1"/>
</dbReference>
<dbReference type="Gene3D" id="1.10.630.10">
    <property type="entry name" value="Cytochrome P450"/>
    <property type="match status" value="1"/>
</dbReference>
<dbReference type="InterPro" id="IPR050479">
    <property type="entry name" value="CYP11_CYP27_families"/>
</dbReference>
<dbReference type="InterPro" id="IPR001128">
    <property type="entry name" value="Cyt_P450"/>
</dbReference>
<dbReference type="InterPro" id="IPR017972">
    <property type="entry name" value="Cyt_P450_CS"/>
</dbReference>
<dbReference type="InterPro" id="IPR002401">
    <property type="entry name" value="Cyt_P450_E_grp-I"/>
</dbReference>
<dbReference type="InterPro" id="IPR036396">
    <property type="entry name" value="Cyt_P450_sf"/>
</dbReference>
<dbReference type="PANTHER" id="PTHR24279:SF3">
    <property type="entry name" value="CHOLESTEROL SIDE-CHAIN CLEAVAGE ENZYME, MITOCHONDRIAL"/>
    <property type="match status" value="1"/>
</dbReference>
<dbReference type="PANTHER" id="PTHR24279">
    <property type="entry name" value="CYTOCHROME P450"/>
    <property type="match status" value="1"/>
</dbReference>
<dbReference type="Pfam" id="PF00067">
    <property type="entry name" value="p450"/>
    <property type="match status" value="1"/>
</dbReference>
<dbReference type="PRINTS" id="PR00463">
    <property type="entry name" value="EP450I"/>
</dbReference>
<dbReference type="PRINTS" id="PR00385">
    <property type="entry name" value="P450"/>
</dbReference>
<dbReference type="SUPFAM" id="SSF48264">
    <property type="entry name" value="Cytochrome P450"/>
    <property type="match status" value="1"/>
</dbReference>
<dbReference type="PROSITE" id="PS00086">
    <property type="entry name" value="CYTOCHROME_P450"/>
    <property type="match status" value="1"/>
</dbReference>
<organism>
    <name type="scientific">Hypanus americanus</name>
    <name type="common">Southern stingray</name>
    <name type="synonym">Dasyatis americana</name>
    <dbReference type="NCBI Taxonomy" id="2484686"/>
    <lineage>
        <taxon>Eukaryota</taxon>
        <taxon>Metazoa</taxon>
        <taxon>Chordata</taxon>
        <taxon>Craniata</taxon>
        <taxon>Vertebrata</taxon>
        <taxon>Chondrichthyes</taxon>
        <taxon>Elasmobranchii</taxon>
        <taxon>Batoidea</taxon>
        <taxon>Myliobatiformes</taxon>
        <taxon>Dasyatidae</taxon>
        <taxon>Hypanus</taxon>
    </lineage>
</organism>
<proteinExistence type="evidence at transcript level"/>
<reference key="1">
    <citation type="journal article" date="1997" name="Gene">
        <title>Isolation of the putative cDNA encoding cholesterol side chain cleavage cytochrome P450 (CYP11A) of the southern stingray (Dasyatis americana).</title>
        <authorList>
            <person name="Nunez S."/>
            <person name="Trant J.M."/>
        </authorList>
    </citation>
    <scope>NUCLEOTIDE SEQUENCE [MRNA]</scope>
    <source>
        <tissue>Interrenal gland</tissue>
    </source>
</reference>
<feature type="transit peptide" description="Mitochondrion" evidence="1">
    <location>
        <begin position="1" status="less than"/>
        <end position="39"/>
    </location>
</feature>
<feature type="chain" id="PRO_0000003592" description="Cholesterol side-chain cleavage enzyme, mitochondrial">
    <location>
        <begin position="40"/>
        <end position="514"/>
    </location>
</feature>
<feature type="binding site" description="axial binding residue" evidence="2">
    <location>
        <position position="461"/>
    </location>
    <ligand>
        <name>heme</name>
        <dbReference type="ChEBI" id="CHEBI:30413"/>
    </ligand>
    <ligandPart>
        <name>Fe</name>
        <dbReference type="ChEBI" id="CHEBI:18248"/>
    </ligandPart>
</feature>
<feature type="non-terminal residue">
    <location>
        <position position="1"/>
    </location>
</feature>
<evidence type="ECO:0000250" key="1">
    <source>
        <dbReference type="UniProtKB" id="P00189"/>
    </source>
</evidence>
<evidence type="ECO:0000250" key="2">
    <source>
        <dbReference type="UniProtKB" id="P05108"/>
    </source>
</evidence>
<evidence type="ECO:0000250" key="3">
    <source>
        <dbReference type="UniProtKB" id="P14137"/>
    </source>
</evidence>
<evidence type="ECO:0000305" key="4"/>
<sequence>SFRLSLSASTYAQRGSFTTPEHDFTLFPHRNHSVTSESRIPSEQTLKSLTDIPGNWRKNWLNVYYFWRSNGLNNAHQWMLDNFNKYGPIYREKIAYYESINIINPADAVIMNKSEGPFPKRIEMAPWVAYRDLRKENYGVQLLNGENWKRTRLILNNSIFAQSSIQRLVPLFNEVVLDFVSMVHKEVEKSRSDYWKTDLTNDLFKLALEVICYILYGERLDLLQRKYNKAPQKFIDSIATMFHSTPIMLYVPPSLLKSINSKIWQQHVGSWDNIFEHADTYLKKAYRQFQQGSKNEHAFPGVLTELLLQGALPFEDIRASIIDVMSGAIDTTSTTVHWMMYELAKHPHIQKNVRSEIMEAHQKTEGDPVKMLKSVPLLKCVVKETLRLYPVAISIQRYLNEDTVLQNYHIPAGTLVQLGLYAMGRNPKIFKNPEQYNPERWLKGEDTHFRHLGFGFGPRQCIGRRIAETQMVLLMIHMLQNFKIETDPMTEVKSKFSLILIPDKPINLKFTPIK</sequence>
<protein>
    <recommendedName>
        <fullName>Cholesterol side-chain cleavage enzyme, mitochondrial</fullName>
        <ecNumber>1.14.15.6</ecNumber>
    </recommendedName>
    <alternativeName>
        <fullName>CYPXIA1</fullName>
    </alternativeName>
    <alternativeName>
        <fullName>Cholesterol desmolase</fullName>
    </alternativeName>
    <alternativeName>
        <fullName>Cytochrome P450 11A1</fullName>
    </alternativeName>
    <alternativeName>
        <fullName>Cytochrome P450(scc)</fullName>
    </alternativeName>
</protein>
<keyword id="KW-0153">Cholesterol metabolism</keyword>
<keyword id="KW-0349">Heme</keyword>
<keyword id="KW-0408">Iron</keyword>
<keyword id="KW-0443">Lipid metabolism</keyword>
<keyword id="KW-0472">Membrane</keyword>
<keyword id="KW-0479">Metal-binding</keyword>
<keyword id="KW-0496">Mitochondrion</keyword>
<keyword id="KW-0999">Mitochondrion inner membrane</keyword>
<keyword id="KW-0503">Monooxygenase</keyword>
<keyword id="KW-0560">Oxidoreductase</keyword>
<keyword id="KW-0753">Steroid metabolism</keyword>
<keyword id="KW-0755">Steroidogenesis</keyword>
<keyword id="KW-1207">Sterol metabolism</keyword>
<keyword id="KW-0809">Transit peptide</keyword>
<comment type="function">
    <text evidence="2">Catalyzes the side-chain cleavage reaction of cholesterol to pregnenolone, the precursor of most steroid hormones.</text>
</comment>
<comment type="catalytic activity">
    <reaction evidence="2">
        <text>6 reduced [adrenodoxin] + cholesterol + 3 O2 + 6 H(+) = 4-methylpentanal + pregnenolone + 6 oxidized [adrenodoxin] + 4 H2O</text>
        <dbReference type="Rhea" id="RHEA:35739"/>
        <dbReference type="Rhea" id="RHEA-COMP:9998"/>
        <dbReference type="Rhea" id="RHEA-COMP:9999"/>
        <dbReference type="ChEBI" id="CHEBI:15377"/>
        <dbReference type="ChEBI" id="CHEBI:15378"/>
        <dbReference type="ChEBI" id="CHEBI:15379"/>
        <dbReference type="ChEBI" id="CHEBI:16113"/>
        <dbReference type="ChEBI" id="CHEBI:16581"/>
        <dbReference type="ChEBI" id="CHEBI:17998"/>
        <dbReference type="ChEBI" id="CHEBI:33737"/>
        <dbReference type="ChEBI" id="CHEBI:33738"/>
        <dbReference type="EC" id="1.14.15.6"/>
    </reaction>
</comment>
<comment type="cofactor">
    <cofactor evidence="2">
        <name>heme</name>
        <dbReference type="ChEBI" id="CHEBI:30413"/>
    </cofactor>
</comment>
<comment type="pathway">
    <text>Lipid metabolism; C21-steroid hormone metabolism.</text>
</comment>
<comment type="subcellular location">
    <subcellularLocation>
        <location evidence="3">Mitochondrion inner membrane</location>
        <topology evidence="4">Peripheral membrane protein</topology>
    </subcellularLocation>
    <text evidence="3">Localizes to the matrix side of the mitochondrion inner membrane.</text>
</comment>
<comment type="similarity">
    <text evidence="4">Belongs to the cytochrome P450 family.</text>
</comment>
<accession>Q92045</accession>